<dbReference type="EMBL" id="AM933172">
    <property type="protein sequence ID" value="CAR33126.1"/>
    <property type="molecule type" value="Genomic_DNA"/>
</dbReference>
<dbReference type="RefSeq" id="WP_000921389.1">
    <property type="nucleotide sequence ID" value="NC_011294.1"/>
</dbReference>
<dbReference type="SMR" id="B5QUC2"/>
<dbReference type="KEGG" id="set:SEN1546"/>
<dbReference type="HOGENOM" id="CLU_117653_2_1_6"/>
<dbReference type="Proteomes" id="UP000000613">
    <property type="component" value="Chromosome"/>
</dbReference>
<dbReference type="GO" id="GO:0005886">
    <property type="term" value="C:plasma membrane"/>
    <property type="evidence" value="ECO:0007669"/>
    <property type="project" value="UniProtKB-SubCell"/>
</dbReference>
<dbReference type="HAMAP" id="MF_00010">
    <property type="entry name" value="UPF0060"/>
    <property type="match status" value="1"/>
</dbReference>
<dbReference type="InterPro" id="IPR003844">
    <property type="entry name" value="UPF0060"/>
</dbReference>
<dbReference type="NCBIfam" id="NF002586">
    <property type="entry name" value="PRK02237.1"/>
    <property type="match status" value="1"/>
</dbReference>
<dbReference type="PANTHER" id="PTHR36116">
    <property type="entry name" value="UPF0060 MEMBRANE PROTEIN YNFA"/>
    <property type="match status" value="1"/>
</dbReference>
<dbReference type="PANTHER" id="PTHR36116:SF1">
    <property type="entry name" value="UPF0060 MEMBRANE PROTEIN YNFA"/>
    <property type="match status" value="1"/>
</dbReference>
<dbReference type="Pfam" id="PF02694">
    <property type="entry name" value="UPF0060"/>
    <property type="match status" value="1"/>
</dbReference>
<dbReference type="SUPFAM" id="SSF103481">
    <property type="entry name" value="Multidrug resistance efflux transporter EmrE"/>
    <property type="match status" value="1"/>
</dbReference>
<name>YNFA_SALEP</name>
<gene>
    <name evidence="1" type="primary">ynfA</name>
    <name type="ordered locus">SEN1546</name>
</gene>
<sequence>MLKTTLLFFVTALCEIIGCFLPWLWLKRGASVWWLLPAAASLALFVWLLTLHPAASGRVYAAYGGVYVCTALLWLRVVDGVRLTVYDWCGALIALCGMLIIVVGWGRT</sequence>
<proteinExistence type="inferred from homology"/>
<protein>
    <recommendedName>
        <fullName evidence="1">UPF0060 membrane protein YnfA</fullName>
    </recommendedName>
</protein>
<evidence type="ECO:0000255" key="1">
    <source>
        <dbReference type="HAMAP-Rule" id="MF_00010"/>
    </source>
</evidence>
<organism>
    <name type="scientific">Salmonella enteritidis PT4 (strain P125109)</name>
    <dbReference type="NCBI Taxonomy" id="550537"/>
    <lineage>
        <taxon>Bacteria</taxon>
        <taxon>Pseudomonadati</taxon>
        <taxon>Pseudomonadota</taxon>
        <taxon>Gammaproteobacteria</taxon>
        <taxon>Enterobacterales</taxon>
        <taxon>Enterobacteriaceae</taxon>
        <taxon>Salmonella</taxon>
    </lineage>
</organism>
<keyword id="KW-0997">Cell inner membrane</keyword>
<keyword id="KW-1003">Cell membrane</keyword>
<keyword id="KW-0472">Membrane</keyword>
<keyword id="KW-0812">Transmembrane</keyword>
<keyword id="KW-1133">Transmembrane helix</keyword>
<comment type="subcellular location">
    <subcellularLocation>
        <location evidence="1">Cell inner membrane</location>
        <topology evidence="1">Multi-pass membrane protein</topology>
    </subcellularLocation>
</comment>
<comment type="similarity">
    <text evidence="1">Belongs to the UPF0060 family.</text>
</comment>
<feature type="chain" id="PRO_1000089256" description="UPF0060 membrane protein YnfA">
    <location>
        <begin position="1"/>
        <end position="108"/>
    </location>
</feature>
<feature type="topological domain" description="Periplasmic" evidence="1">
    <location>
        <begin position="1"/>
        <end position="5"/>
    </location>
</feature>
<feature type="transmembrane region" description="Helical" evidence="1">
    <location>
        <begin position="6"/>
        <end position="26"/>
    </location>
</feature>
<feature type="topological domain" description="Cytoplasmic" evidence="1">
    <location>
        <begin position="27"/>
        <end position="30"/>
    </location>
</feature>
<feature type="transmembrane region" description="Helical" evidence="1">
    <location>
        <begin position="31"/>
        <end position="51"/>
    </location>
</feature>
<feature type="topological domain" description="Periplasmic" evidence="1">
    <location>
        <begin position="52"/>
        <end position="60"/>
    </location>
</feature>
<feature type="transmembrane region" description="Helical" evidence="1">
    <location>
        <begin position="61"/>
        <end position="81"/>
    </location>
</feature>
<feature type="topological domain" description="Cytoplasmic" evidence="1">
    <location>
        <begin position="82"/>
        <end position="84"/>
    </location>
</feature>
<feature type="transmembrane region" description="Helical" evidence="1">
    <location>
        <begin position="85"/>
        <end position="105"/>
    </location>
</feature>
<feature type="topological domain" description="Periplasmic" evidence="1">
    <location>
        <begin position="106"/>
        <end position="108"/>
    </location>
</feature>
<accession>B5QUC2</accession>
<reference key="1">
    <citation type="journal article" date="2008" name="Genome Res.">
        <title>Comparative genome analysis of Salmonella enteritidis PT4 and Salmonella gallinarum 287/91 provides insights into evolutionary and host adaptation pathways.</title>
        <authorList>
            <person name="Thomson N.R."/>
            <person name="Clayton D.J."/>
            <person name="Windhorst D."/>
            <person name="Vernikos G."/>
            <person name="Davidson S."/>
            <person name="Churcher C."/>
            <person name="Quail M.A."/>
            <person name="Stevens M."/>
            <person name="Jones M.A."/>
            <person name="Watson M."/>
            <person name="Barron A."/>
            <person name="Layton A."/>
            <person name="Pickard D."/>
            <person name="Kingsley R.A."/>
            <person name="Bignell A."/>
            <person name="Clark L."/>
            <person name="Harris B."/>
            <person name="Ormond D."/>
            <person name="Abdellah Z."/>
            <person name="Brooks K."/>
            <person name="Cherevach I."/>
            <person name="Chillingworth T."/>
            <person name="Woodward J."/>
            <person name="Norberczak H."/>
            <person name="Lord A."/>
            <person name="Arrowsmith C."/>
            <person name="Jagels K."/>
            <person name="Moule S."/>
            <person name="Mungall K."/>
            <person name="Saunders M."/>
            <person name="Whitehead S."/>
            <person name="Chabalgoity J.A."/>
            <person name="Maskell D."/>
            <person name="Humphreys T."/>
            <person name="Roberts M."/>
            <person name="Barrow P.A."/>
            <person name="Dougan G."/>
            <person name="Parkhill J."/>
        </authorList>
    </citation>
    <scope>NUCLEOTIDE SEQUENCE [LARGE SCALE GENOMIC DNA]</scope>
    <source>
        <strain>P125109</strain>
    </source>
</reference>